<name>HA19_CANLF</name>
<organism>
    <name type="scientific">Canis lupus familiaris</name>
    <name type="common">Dog</name>
    <name type="synonym">Canis familiaris</name>
    <dbReference type="NCBI Taxonomy" id="9615"/>
    <lineage>
        <taxon>Eukaryota</taxon>
        <taxon>Metazoa</taxon>
        <taxon>Chordata</taxon>
        <taxon>Craniata</taxon>
        <taxon>Vertebrata</taxon>
        <taxon>Euteleostomi</taxon>
        <taxon>Mammalia</taxon>
        <taxon>Eutheria</taxon>
        <taxon>Laurasiatheria</taxon>
        <taxon>Carnivora</taxon>
        <taxon>Caniformia</taxon>
        <taxon>Canidae</taxon>
        <taxon>Canis</taxon>
    </lineage>
</organism>
<sequence>MEVVMPRALLVLLSAALALTPTRAGSHSLRYFYTSVSRPGAGDPRFIAVGYVDDTQFVRFDSDAATGRMEPRAPWVEQEGPEYWDRQTRTIKETARTFRVDLDTLRGYYNQSEAGSHTRQTMYGCDLGPDGRLLRGYSQDAYDGADYIALNEDLRSWTAADTAAQITQRKWEAAGVAELQWRNYLETTCVEWLRRYLEMGKETLLRADPPSTRVTHHPVSDHEVTLRCWALGFYPAEITLTWQRDGEDQTQDTEVVDTRPAGDGTFQKWAAVVVPSGQEQRYTCHVQHEGLPEPITRRWEPSPLSTIVIVSIAALVLLVVAGVIGAVIWRKQRSGGKGPGYSHAARDDSAQGSDVSLTAPRV</sequence>
<feature type="signal peptide" evidence="1">
    <location>
        <begin position="1"/>
        <end position="24"/>
    </location>
</feature>
<feature type="chain" id="PRO_0000018945" description="DLA class I histocompatibility antigen, A9/A9 alpha chain">
    <location>
        <begin position="25"/>
        <end position="362"/>
    </location>
</feature>
<feature type="topological domain" description="Extracellular" evidence="1">
    <location>
        <begin position="25"/>
        <end position="306"/>
    </location>
</feature>
<feature type="transmembrane region" description="Helical" evidence="1">
    <location>
        <begin position="307"/>
        <end position="329"/>
    </location>
</feature>
<feature type="topological domain" description="Cytoplasmic" evidence="1">
    <location>
        <begin position="330"/>
        <end position="362"/>
    </location>
</feature>
<feature type="domain" description="Ig-like C1-type">
    <location>
        <begin position="210"/>
        <end position="296"/>
    </location>
</feature>
<feature type="region of interest" description="Alpha-1">
    <location>
        <begin position="25"/>
        <end position="114"/>
    </location>
</feature>
<feature type="region of interest" description="Alpha-2">
    <location>
        <begin position="115"/>
        <end position="207"/>
    </location>
</feature>
<feature type="region of interest" description="Alpha-3">
    <location>
        <begin position="208"/>
        <end position="299"/>
    </location>
</feature>
<feature type="region of interest" description="Connecting peptide">
    <location>
        <begin position="300"/>
        <end position="306"/>
    </location>
</feature>
<feature type="region of interest" description="Disordered" evidence="3">
    <location>
        <begin position="333"/>
        <end position="362"/>
    </location>
</feature>
<feature type="glycosylation site" description="N-linked (GlcNAc...) asparagine" evidence="1">
    <location>
        <position position="110"/>
    </location>
</feature>
<feature type="disulfide bond" evidence="2">
    <location>
        <begin position="125"/>
        <end position="189"/>
    </location>
</feature>
<feature type="disulfide bond" evidence="2">
    <location>
        <begin position="228"/>
        <end position="284"/>
    </location>
</feature>
<comment type="function">
    <text>Involved in the presentation of foreign antigens to the immune system.</text>
</comment>
<comment type="subunit">
    <text>Heterodimer of an alpha chain and a beta chain (beta-2-microglobulin).</text>
</comment>
<comment type="subcellular location">
    <subcellularLocation>
        <location>Membrane</location>
        <topology>Single-pass type I membrane protein</topology>
    </subcellularLocation>
</comment>
<comment type="similarity">
    <text evidence="4">Belongs to the MHC class I family.</text>
</comment>
<protein>
    <recommendedName>
        <fullName>DLA class I histocompatibility antigen, A9/A9 alpha chain</fullName>
    </recommendedName>
</protein>
<evidence type="ECO:0000255" key="1"/>
<evidence type="ECO:0000255" key="2">
    <source>
        <dbReference type="PROSITE-ProRule" id="PRU00114"/>
    </source>
</evidence>
<evidence type="ECO:0000256" key="3">
    <source>
        <dbReference type="SAM" id="MobiDB-lite"/>
    </source>
</evidence>
<evidence type="ECO:0000305" key="4"/>
<proteinExistence type="evidence at transcript level"/>
<dbReference type="EMBL" id="M32283">
    <property type="protein sequence ID" value="AAA30865.1"/>
    <property type="molecule type" value="mRNA"/>
</dbReference>
<dbReference type="PIR" id="A45845">
    <property type="entry name" value="A45845"/>
</dbReference>
<dbReference type="SMR" id="P18466"/>
<dbReference type="FunCoup" id="P18466">
    <property type="interactions" value="93"/>
</dbReference>
<dbReference type="STRING" id="9615.ENSCAFP00000000716"/>
<dbReference type="PaxDb" id="9612-ENSCAFP00000000718"/>
<dbReference type="eggNOG" id="ENOG502RQEK">
    <property type="taxonomic scope" value="Eukaryota"/>
</dbReference>
<dbReference type="InParanoid" id="P18466"/>
<dbReference type="Proteomes" id="UP000002254">
    <property type="component" value="Unplaced"/>
</dbReference>
<dbReference type="Proteomes" id="UP000694429">
    <property type="component" value="Unplaced"/>
</dbReference>
<dbReference type="Proteomes" id="UP000694542">
    <property type="component" value="Unplaced"/>
</dbReference>
<dbReference type="Proteomes" id="UP000805418">
    <property type="component" value="Unplaced"/>
</dbReference>
<dbReference type="GO" id="GO:0009897">
    <property type="term" value="C:external side of plasma membrane"/>
    <property type="evidence" value="ECO:0000318"/>
    <property type="project" value="GO_Central"/>
</dbReference>
<dbReference type="GO" id="GO:0005615">
    <property type="term" value="C:extracellular space"/>
    <property type="evidence" value="ECO:0000318"/>
    <property type="project" value="GO_Central"/>
</dbReference>
<dbReference type="GO" id="GO:0098553">
    <property type="term" value="C:lumenal side of endoplasmic reticulum membrane"/>
    <property type="evidence" value="ECO:0007669"/>
    <property type="project" value="UniProtKB-ARBA"/>
</dbReference>
<dbReference type="GO" id="GO:0042612">
    <property type="term" value="C:MHC class I protein complex"/>
    <property type="evidence" value="ECO:0007669"/>
    <property type="project" value="UniProtKB-KW"/>
</dbReference>
<dbReference type="GO" id="GO:0030670">
    <property type="term" value="C:phagocytic vesicle membrane"/>
    <property type="evidence" value="ECO:0007669"/>
    <property type="project" value="UniProtKB-ARBA"/>
</dbReference>
<dbReference type="GO" id="GO:0042605">
    <property type="term" value="F:peptide antigen binding"/>
    <property type="evidence" value="ECO:0000318"/>
    <property type="project" value="GO_Central"/>
</dbReference>
<dbReference type="GO" id="GO:0005102">
    <property type="term" value="F:signaling receptor binding"/>
    <property type="evidence" value="ECO:0000318"/>
    <property type="project" value="GO_Central"/>
</dbReference>
<dbReference type="GO" id="GO:0002486">
    <property type="term" value="P:antigen processing and presentation of endogenous peptide antigen via MHC class I via ER pathway, TAP-independent"/>
    <property type="evidence" value="ECO:0000318"/>
    <property type="project" value="GO_Central"/>
</dbReference>
<dbReference type="GO" id="GO:0002476">
    <property type="term" value="P:antigen processing and presentation of endogenous peptide antigen via MHC class Ib"/>
    <property type="evidence" value="ECO:0000318"/>
    <property type="project" value="GO_Central"/>
</dbReference>
<dbReference type="GO" id="GO:0006955">
    <property type="term" value="P:immune response"/>
    <property type="evidence" value="ECO:0000318"/>
    <property type="project" value="GO_Central"/>
</dbReference>
<dbReference type="GO" id="GO:0001916">
    <property type="term" value="P:positive regulation of T cell mediated cytotoxicity"/>
    <property type="evidence" value="ECO:0000318"/>
    <property type="project" value="GO_Central"/>
</dbReference>
<dbReference type="CDD" id="cd07698">
    <property type="entry name" value="IgC1_MHC_I_alpha3"/>
    <property type="match status" value="1"/>
</dbReference>
<dbReference type="FunFam" id="2.60.40.10:FF:000014">
    <property type="entry name" value="H-2 class I histocompatibility antigen, alpha chain"/>
    <property type="match status" value="1"/>
</dbReference>
<dbReference type="FunFam" id="3.30.500.10:FF:000001">
    <property type="entry name" value="H-2 class I histocompatibility antigen, alpha chain"/>
    <property type="match status" value="1"/>
</dbReference>
<dbReference type="Gene3D" id="2.60.40.10">
    <property type="entry name" value="Immunoglobulins"/>
    <property type="match status" value="1"/>
</dbReference>
<dbReference type="Gene3D" id="3.30.500.10">
    <property type="entry name" value="MHC class I-like antigen recognition-like"/>
    <property type="match status" value="1"/>
</dbReference>
<dbReference type="InterPro" id="IPR007110">
    <property type="entry name" value="Ig-like_dom"/>
</dbReference>
<dbReference type="InterPro" id="IPR036179">
    <property type="entry name" value="Ig-like_dom_sf"/>
</dbReference>
<dbReference type="InterPro" id="IPR013783">
    <property type="entry name" value="Ig-like_fold"/>
</dbReference>
<dbReference type="InterPro" id="IPR003006">
    <property type="entry name" value="Ig/MHC_CS"/>
</dbReference>
<dbReference type="InterPro" id="IPR003597">
    <property type="entry name" value="Ig_C1-set"/>
</dbReference>
<dbReference type="InterPro" id="IPR050208">
    <property type="entry name" value="MHC_class-I_related"/>
</dbReference>
<dbReference type="InterPro" id="IPR011161">
    <property type="entry name" value="MHC_I-like_Ag-recog"/>
</dbReference>
<dbReference type="InterPro" id="IPR037055">
    <property type="entry name" value="MHC_I-like_Ag-recog_sf"/>
</dbReference>
<dbReference type="InterPro" id="IPR011162">
    <property type="entry name" value="MHC_I/II-like_Ag-recog"/>
</dbReference>
<dbReference type="InterPro" id="IPR001039">
    <property type="entry name" value="MHC_I_a_a1/a2"/>
</dbReference>
<dbReference type="InterPro" id="IPR010579">
    <property type="entry name" value="MHC_I_a_C"/>
</dbReference>
<dbReference type="PANTHER" id="PTHR16675:SF251">
    <property type="entry name" value="HLA CLASS I HISTOCOMPATIBILITY ANTIGEN, C ALPHA CHAIN"/>
    <property type="match status" value="1"/>
</dbReference>
<dbReference type="PANTHER" id="PTHR16675">
    <property type="entry name" value="MHC CLASS I-RELATED"/>
    <property type="match status" value="1"/>
</dbReference>
<dbReference type="Pfam" id="PF07654">
    <property type="entry name" value="C1-set"/>
    <property type="match status" value="1"/>
</dbReference>
<dbReference type="Pfam" id="PF00129">
    <property type="entry name" value="MHC_I"/>
    <property type="match status" value="1"/>
</dbReference>
<dbReference type="Pfam" id="PF06623">
    <property type="entry name" value="MHC_I_C"/>
    <property type="match status" value="1"/>
</dbReference>
<dbReference type="PRINTS" id="PR01638">
    <property type="entry name" value="MHCCLASSI"/>
</dbReference>
<dbReference type="SMART" id="SM00407">
    <property type="entry name" value="IGc1"/>
    <property type="match status" value="1"/>
</dbReference>
<dbReference type="SUPFAM" id="SSF48726">
    <property type="entry name" value="Immunoglobulin"/>
    <property type="match status" value="1"/>
</dbReference>
<dbReference type="SUPFAM" id="SSF54452">
    <property type="entry name" value="MHC antigen-recognition domain"/>
    <property type="match status" value="1"/>
</dbReference>
<dbReference type="PROSITE" id="PS50835">
    <property type="entry name" value="IG_LIKE"/>
    <property type="match status" value="1"/>
</dbReference>
<dbReference type="PROSITE" id="PS00290">
    <property type="entry name" value="IG_MHC"/>
    <property type="match status" value="1"/>
</dbReference>
<keyword id="KW-1015">Disulfide bond</keyword>
<keyword id="KW-0325">Glycoprotein</keyword>
<keyword id="KW-0391">Immunity</keyword>
<keyword id="KW-0472">Membrane</keyword>
<keyword id="KW-0490">MHC I</keyword>
<keyword id="KW-1185">Reference proteome</keyword>
<keyword id="KW-0732">Signal</keyword>
<keyword id="KW-0812">Transmembrane</keyword>
<keyword id="KW-1133">Transmembrane helix</keyword>
<accession>P18466</accession>
<reference key="1">
    <citation type="journal article" date="1990" name="Immunogenetics">
        <title>Nucleotide sequence of a dog class I cDNA clone.</title>
        <authorList>
            <person name="Sarmiento U.M."/>
            <person name="Storb R."/>
        </authorList>
    </citation>
    <scope>NUCLEOTIDE SEQUENCE [MRNA]</scope>
</reference>